<name>FOLE_YEASL</name>
<evidence type="ECO:0000250" key="1">
    <source>
        <dbReference type="UniProtKB" id="P08192"/>
    </source>
</evidence>
<evidence type="ECO:0000250" key="2">
    <source>
        <dbReference type="UniProtKB" id="Q08645"/>
    </source>
</evidence>
<evidence type="ECO:0000305" key="3"/>
<evidence type="ECO:0000312" key="4">
    <source>
        <dbReference type="EMBL" id="EGA80713.1"/>
    </source>
</evidence>
<proteinExistence type="inferred from homology"/>
<comment type="function">
    <text evidence="2">Catalyzes conversion of folates to polyglutamate derivatives allowing concentration of folate compounds in the cell and the intracellular retention of these cofactors, which are important substrates for most of the folate-dependent enzymes that are involved in one-carbon transfer reactions involved in purine, pyrimidine and amino acid synthesis. Required for methionine synthesis and maintenance of intact mitochondrial DNA. Involved in telomere maintenance (By similarity).</text>
</comment>
<comment type="catalytic activity">
    <reaction evidence="2">
        <text>(6S)-5,6,7,8-tetrahydrofolyl-(gamma-L-Glu)(n) + L-glutamate + ATP = (6S)-5,6,7,8-tetrahydrofolyl-(gamma-L-Glu)(n+1) + ADP + phosphate + H(+)</text>
        <dbReference type="Rhea" id="RHEA:10580"/>
        <dbReference type="Rhea" id="RHEA-COMP:14738"/>
        <dbReference type="Rhea" id="RHEA-COMP:14740"/>
        <dbReference type="ChEBI" id="CHEBI:15378"/>
        <dbReference type="ChEBI" id="CHEBI:29985"/>
        <dbReference type="ChEBI" id="CHEBI:30616"/>
        <dbReference type="ChEBI" id="CHEBI:43474"/>
        <dbReference type="ChEBI" id="CHEBI:141005"/>
        <dbReference type="ChEBI" id="CHEBI:456216"/>
        <dbReference type="EC" id="6.3.2.17"/>
    </reaction>
</comment>
<comment type="cofactor">
    <cofactor evidence="2">
        <name>a monovalent cation</name>
        <dbReference type="ChEBI" id="CHEBI:60242"/>
    </cofactor>
    <text evidence="2">A monovalent cation.</text>
</comment>
<comment type="pathway">
    <text evidence="2">Cofactor biosynthesis; tetrahydrofolylpolyglutamate biosynthesis.</text>
</comment>
<comment type="subcellular location">
    <subcellularLocation>
        <location evidence="2">Mitochondrion inner membrane</location>
    </subcellularLocation>
    <subcellularLocation>
        <location evidence="2">Mitochondrion matrix</location>
    </subcellularLocation>
    <subcellularLocation>
        <location evidence="2">Cytoplasm</location>
    </subcellularLocation>
</comment>
<comment type="similarity">
    <text evidence="2">Belongs to the folylpolyglutamate synthase family.</text>
</comment>
<comment type="sequence caution" evidence="3">
    <conflict type="erroneous initiation">
        <sequence resource="EMBL-CDS" id="EGA80713"/>
    </conflict>
    <text>Truncated N-terminus.</text>
</comment>
<comment type="sequence caution" evidence="3">
    <conflict type="frameshift">
        <sequence resource="EMBL-CDS" id="EGA80713"/>
    </conflict>
</comment>
<protein>
    <recommendedName>
        <fullName evidence="2">Folylpolyglutamate synthase</fullName>
        <ecNumber evidence="2">6.3.2.17</ecNumber>
    </recommendedName>
    <alternativeName>
        <fullName evidence="2">Folylpoly-gamma-glutamate synthetase</fullName>
        <shortName evidence="2">FPGS</shortName>
    </alternativeName>
    <alternativeName>
        <fullName evidence="2">Tetrahydrofolylpolyglutamate synthase</fullName>
        <shortName evidence="2">Tetrahydrofolate synthase</shortName>
    </alternativeName>
</protein>
<sequence>MHKGKKNYPNLITSFRMNLKKIILNHDRFSHPERWKTNALLRFTFVYIKFLFDLMIIKNPLRMVGKTYRDAVTALNSLQSNYANIMAIRQTGDRKNTMTLLEMHEWSRRIGYSASDFNKLNIVHITGTKGKGSTAAFTSSILGQYKEQLPRIGLYTSPHLKSVRERIRINGEPISEEKFAKYFFEVWDRLDSTTSSLDKFPHMIPGSKPGYFKFLTLLSFHTFIQEDCKSCVYEVGVGGELDSTNIIEKPIVCGVTLLGIDHTFMLGDTIEEIAWNKGGIFKSGAPAFTVEKQPPQGLTILKERAEERKTTLTEVPPFKQLENVKLGIAGEFQKSNASLAVMLASEILHTSNILEEKIKCSSNASIPEKFIIGLQNTKWEGRCQVLEKGKNVWYIDGAHTKDSMVAASTWFRDMVRLSKRKKILLFNQQSRDANALVNNLYSSVSPEITFDDVIFTTNVTWKSGSYSADLVSMNTSQEDVEKLKVQESLVKNWNKIDDNRAKTHVTASIEEANELIETLYDEPADIFVTGSLHLVGGLLVVFDRIDVK</sequence>
<dbReference type="EC" id="6.3.2.17" evidence="2"/>
<dbReference type="EMBL" id="ADVV01000080">
    <property type="protein sequence ID" value="EGA80713.1"/>
    <property type="status" value="ALT_SEQ"/>
    <property type="molecule type" value="Genomic_DNA"/>
</dbReference>
<dbReference type="SMR" id="E7KUJ4"/>
<dbReference type="HOGENOM" id="CLU_015869_0_1_1"/>
<dbReference type="OrthoDB" id="19167at4893"/>
<dbReference type="UniPathway" id="UPA00850"/>
<dbReference type="GO" id="GO:0005829">
    <property type="term" value="C:cytosol"/>
    <property type="evidence" value="ECO:0007669"/>
    <property type="project" value="TreeGrafter"/>
</dbReference>
<dbReference type="GO" id="GO:0005743">
    <property type="term" value="C:mitochondrial inner membrane"/>
    <property type="evidence" value="ECO:0007669"/>
    <property type="project" value="UniProtKB-SubCell"/>
</dbReference>
<dbReference type="GO" id="GO:0005759">
    <property type="term" value="C:mitochondrial matrix"/>
    <property type="evidence" value="ECO:0007669"/>
    <property type="project" value="UniProtKB-SubCell"/>
</dbReference>
<dbReference type="GO" id="GO:0005524">
    <property type="term" value="F:ATP binding"/>
    <property type="evidence" value="ECO:0007669"/>
    <property type="project" value="UniProtKB-KW"/>
</dbReference>
<dbReference type="GO" id="GO:0046872">
    <property type="term" value="F:metal ion binding"/>
    <property type="evidence" value="ECO:0007669"/>
    <property type="project" value="UniProtKB-KW"/>
</dbReference>
<dbReference type="GO" id="GO:0004326">
    <property type="term" value="F:tetrahydrofolylpolyglutamate synthase activity"/>
    <property type="evidence" value="ECO:0007669"/>
    <property type="project" value="UniProtKB-EC"/>
</dbReference>
<dbReference type="GO" id="GO:0006730">
    <property type="term" value="P:one-carbon metabolic process"/>
    <property type="evidence" value="ECO:0007669"/>
    <property type="project" value="UniProtKB-KW"/>
</dbReference>
<dbReference type="FunFam" id="3.40.1190.10:FF:000009">
    <property type="entry name" value="Folylpolyglutamate synthase"/>
    <property type="match status" value="1"/>
</dbReference>
<dbReference type="FunFam" id="3.90.190.20:FF:000009">
    <property type="entry name" value="Folylpolyglutamate synthase"/>
    <property type="match status" value="1"/>
</dbReference>
<dbReference type="Gene3D" id="3.90.190.20">
    <property type="entry name" value="Mur ligase, C-terminal domain"/>
    <property type="match status" value="1"/>
</dbReference>
<dbReference type="Gene3D" id="3.40.1190.10">
    <property type="entry name" value="Mur-like, catalytic domain"/>
    <property type="match status" value="1"/>
</dbReference>
<dbReference type="InterPro" id="IPR001645">
    <property type="entry name" value="Folylpolyglutamate_synth"/>
</dbReference>
<dbReference type="InterPro" id="IPR018109">
    <property type="entry name" value="Folylpolyglutamate_synth_CS"/>
</dbReference>
<dbReference type="InterPro" id="IPR023600">
    <property type="entry name" value="Folylpolyglutamate_synth_euk"/>
</dbReference>
<dbReference type="InterPro" id="IPR036565">
    <property type="entry name" value="Mur-like_cat_sf"/>
</dbReference>
<dbReference type="InterPro" id="IPR036615">
    <property type="entry name" value="Mur_ligase_C_dom_sf"/>
</dbReference>
<dbReference type="NCBIfam" id="TIGR01499">
    <property type="entry name" value="folC"/>
    <property type="match status" value="1"/>
</dbReference>
<dbReference type="PANTHER" id="PTHR11136:SF5">
    <property type="entry name" value="FOLYLPOLYGLUTAMATE SYNTHASE, MITOCHONDRIAL"/>
    <property type="match status" value="1"/>
</dbReference>
<dbReference type="PANTHER" id="PTHR11136">
    <property type="entry name" value="FOLYLPOLYGLUTAMATE SYNTHASE-RELATED"/>
    <property type="match status" value="1"/>
</dbReference>
<dbReference type="PIRSF" id="PIRSF038895">
    <property type="entry name" value="FPGS"/>
    <property type="match status" value="1"/>
</dbReference>
<dbReference type="SUPFAM" id="SSF53623">
    <property type="entry name" value="MurD-like peptide ligases, catalytic domain"/>
    <property type="match status" value="1"/>
</dbReference>
<dbReference type="SUPFAM" id="SSF53244">
    <property type="entry name" value="MurD-like peptide ligases, peptide-binding domain"/>
    <property type="match status" value="1"/>
</dbReference>
<dbReference type="PROSITE" id="PS01011">
    <property type="entry name" value="FOLYLPOLYGLU_SYNT_1"/>
    <property type="match status" value="1"/>
</dbReference>
<dbReference type="PROSITE" id="PS01012">
    <property type="entry name" value="FOLYLPOLYGLU_SYNT_2"/>
    <property type="match status" value="1"/>
</dbReference>
<keyword id="KW-0067">ATP-binding</keyword>
<keyword id="KW-0963">Cytoplasm</keyword>
<keyword id="KW-0436">Ligase</keyword>
<keyword id="KW-0460">Magnesium</keyword>
<keyword id="KW-0472">Membrane</keyword>
<keyword id="KW-0479">Metal-binding</keyword>
<keyword id="KW-0496">Mitochondrion</keyword>
<keyword id="KW-0999">Mitochondrion inner membrane</keyword>
<keyword id="KW-0547">Nucleotide-binding</keyword>
<keyword id="KW-0554">One-carbon metabolism</keyword>
<accession>E7KUJ4</accession>
<feature type="chain" id="PRO_0000414493" description="Folylpolyglutamate synthase">
    <location>
        <begin position="1"/>
        <end position="548"/>
    </location>
</feature>
<feature type="binding site" evidence="1">
    <location>
        <begin position="130"/>
        <end position="133"/>
    </location>
    <ligand>
        <name>ATP</name>
        <dbReference type="ChEBI" id="CHEBI:30616"/>
    </ligand>
</feature>
<feature type="binding site" evidence="1">
    <location>
        <position position="157"/>
    </location>
    <ligand>
        <name>Mg(2+)</name>
        <dbReference type="ChEBI" id="CHEBI:18420"/>
        <label>1</label>
    </ligand>
</feature>
<feature type="binding site" evidence="1">
    <location>
        <position position="234"/>
    </location>
    <ligand>
        <name>Mg(2+)</name>
        <dbReference type="ChEBI" id="CHEBI:18420"/>
        <label>1</label>
    </ligand>
</feature>
<feature type="binding site" evidence="1">
    <location>
        <position position="262"/>
    </location>
    <ligand>
        <name>Mg(2+)</name>
        <dbReference type="ChEBI" id="CHEBI:18420"/>
        <label>2</label>
    </ligand>
</feature>
<feature type="binding site" evidence="1">
    <location>
        <position position="382"/>
    </location>
    <ligand>
        <name>ATP</name>
        <dbReference type="ChEBI" id="CHEBI:30616"/>
    </ligand>
</feature>
<feature type="binding site" evidence="1">
    <location>
        <position position="396"/>
    </location>
    <ligand>
        <name>ATP</name>
        <dbReference type="ChEBI" id="CHEBI:30616"/>
    </ligand>
</feature>
<organism>
    <name type="scientific">Saccharomyces cerevisiae (strain Lalvin QA23)</name>
    <name type="common">Baker's yeast</name>
    <dbReference type="NCBI Taxonomy" id="764098"/>
    <lineage>
        <taxon>Eukaryota</taxon>
        <taxon>Fungi</taxon>
        <taxon>Dikarya</taxon>
        <taxon>Ascomycota</taxon>
        <taxon>Saccharomycotina</taxon>
        <taxon>Saccharomycetes</taxon>
        <taxon>Saccharomycetales</taxon>
        <taxon>Saccharomycetaceae</taxon>
        <taxon>Saccharomyces</taxon>
    </lineage>
</organism>
<gene>
    <name evidence="2" type="primary">MET7</name>
    <name type="ORF">QA23_4580</name>
</gene>
<reference evidence="4" key="1">
    <citation type="journal article" date="2011" name="PLoS Genet.">
        <title>Whole-genome comparison reveals novel genetic elements that characterize the genome of industrial strains of Saccharomyces cerevisiae.</title>
        <authorList>
            <person name="Borneman A.R."/>
            <person name="Desany B.A."/>
            <person name="Riches D."/>
            <person name="Affourtit J.P."/>
            <person name="Forgan A.H."/>
            <person name="Pretorius I.S."/>
            <person name="Egholm M."/>
            <person name="Chambers P.J."/>
        </authorList>
    </citation>
    <scope>NUCLEOTIDE SEQUENCE [LARGE SCALE GENOMIC DNA]</scope>
    <source>
        <strain>Lalvin QA23</strain>
    </source>
</reference>